<sequence>MGAGVGVAGCTRGHRNWVPSQLPPREIKAGVSLAVVTEFAWVLAPRPKRATASALGTESPRFLDRPDFFDYPDSDQARLLAVAQFIGEKPIVFINSGSSPGLFHHILVGLLVVAFFFLLFQFCTHINFQKGA</sequence>
<keyword id="KW-0025">Alternative splicing</keyword>
<keyword id="KW-1003">Cell membrane</keyword>
<keyword id="KW-0278">Fertilization</keyword>
<keyword id="KW-0472">Membrane</keyword>
<keyword id="KW-1185">Reference proteome</keyword>
<keyword id="KW-0812">Transmembrane</keyword>
<keyword id="KW-1133">Transmembrane helix</keyword>
<name>FIMP_HUMAN</name>
<comment type="function">
    <text evidence="1">May play a role in sperm-oocyte fusion during fertilization.</text>
</comment>
<comment type="interaction">
    <interactant intactId="EBI-12887376">
        <id>Q96LL3</id>
    </interactant>
    <interactant intactId="EBI-3911467">
        <id>Q07325</id>
        <label>CXCL9</label>
    </interactant>
    <organismsDiffer>false</organismsDiffer>
    <experiments>3</experiments>
</comment>
<comment type="interaction">
    <interactant intactId="EBI-12887376">
        <id>Q96LL3</id>
    </interactant>
    <interactant intactId="EBI-2830349">
        <id>Q7Z4F1</id>
        <label>LRP10</label>
    </interactant>
    <organismsDiffer>false</organismsDiffer>
    <experiments>3</experiments>
</comment>
<comment type="interaction">
    <interactant intactId="EBI-12887376">
        <id>Q96LL3</id>
    </interactant>
    <interactant intactId="EBI-13301517">
        <id>Q96S97</id>
        <label>MYADM</label>
    </interactant>
    <organismsDiffer>false</organismsDiffer>
    <experiments>3</experiments>
</comment>
<comment type="interaction">
    <interactant intactId="EBI-12887376">
        <id>Q96LL3</id>
    </interactant>
    <interactant intactId="EBI-6380741">
        <id>P42857</id>
        <label>NSG1</label>
    </interactant>
    <organismsDiffer>false</organismsDiffer>
    <experiments>3</experiments>
</comment>
<comment type="interaction">
    <interactant intactId="EBI-12887376">
        <id>Q96LL3</id>
    </interactant>
    <interactant intactId="EBI-12957629">
        <id>P0DJD7</id>
        <label>PGA4</label>
    </interactant>
    <organismsDiffer>false</organismsDiffer>
    <experiments>3</experiments>
</comment>
<comment type="interaction">
    <interactant intactId="EBI-12887376">
        <id>Q96LL3</id>
    </interactant>
    <interactant intactId="EBI-11721828">
        <id>Q8IY26</id>
        <label>PLPP6</label>
    </interactant>
    <organismsDiffer>false</organismsDiffer>
    <experiments>3</experiments>
</comment>
<comment type="interaction">
    <interactant intactId="EBI-12887376">
        <id>Q96LL3</id>
    </interactant>
    <interactant intactId="EBI-10192441">
        <id>Q86VR2</id>
        <label>RETREG3</label>
    </interactant>
    <organismsDiffer>false</organismsDiffer>
    <experiments>3</experiments>
</comment>
<comment type="interaction">
    <interactant intactId="EBI-12887376">
        <id>Q96LL3</id>
    </interactant>
    <interactant intactId="EBI-8652744">
        <id>Q96IW7</id>
        <label>SEC22A</label>
    </interactant>
    <organismsDiffer>false</organismsDiffer>
    <experiments>3</experiments>
</comment>
<comment type="interaction">
    <interactant intactId="EBI-12887376">
        <id>Q96LL3</id>
    </interactant>
    <interactant intactId="EBI-738687">
        <id>P02808</id>
        <label>STATH</label>
    </interactant>
    <organismsDiffer>false</organismsDiffer>
    <experiments>3</experiments>
</comment>
<comment type="interaction">
    <interactant intactId="EBI-12887376">
        <id>Q96LL3</id>
    </interactant>
    <interactant intactId="EBI-11722971">
        <id>Q53FP2</id>
        <label>TMEM35A</label>
    </interactant>
    <organismsDiffer>false</organismsDiffer>
    <experiments>3</experiments>
</comment>
<comment type="subcellular location">
    <subcellularLocation>
        <location evidence="1">Cell membrane</location>
        <topology evidence="6">Single-pass type I membrane protein</topology>
    </subcellularLocation>
</comment>
<comment type="alternative products">
    <event type="alternative splicing"/>
    <isoform>
        <id>Q96LL3-1</id>
        <name>1</name>
        <sequence type="displayed"/>
    </isoform>
    <isoform>
        <id>Q96LL3-2</id>
        <name>2</name>
        <sequence type="described" ref="VSP_031783"/>
    </isoform>
</comment>
<comment type="tissue specificity">
    <text evidence="3">Testis-specific.</text>
</comment>
<organism>
    <name type="scientific">Homo sapiens</name>
    <name type="common">Human</name>
    <dbReference type="NCBI Taxonomy" id="9606"/>
    <lineage>
        <taxon>Eukaryota</taxon>
        <taxon>Metazoa</taxon>
        <taxon>Chordata</taxon>
        <taxon>Craniata</taxon>
        <taxon>Vertebrata</taxon>
        <taxon>Euteleostomi</taxon>
        <taxon>Mammalia</taxon>
        <taxon>Eutheria</taxon>
        <taxon>Euarchontoglires</taxon>
        <taxon>Primates</taxon>
        <taxon>Haplorrhini</taxon>
        <taxon>Catarrhini</taxon>
        <taxon>Hominidae</taxon>
        <taxon>Homo</taxon>
    </lineage>
</organism>
<feature type="chain" id="PRO_0000321511" description="Fertilization-influencing membrane protein">
    <location>
        <begin position="1"/>
        <end position="132"/>
    </location>
</feature>
<feature type="transmembrane region" description="Helical" evidence="2">
    <location>
        <begin position="100"/>
        <end position="120"/>
    </location>
</feature>
<feature type="splice variant" id="VSP_031783" description="In isoform 2." evidence="4">
    <original>MGAGVGVAGCTRGHRNWVPSQLPPREIKAGVSLAVVTEFAWVL</original>
    <variation>MRLWPWVLVWVWLAALGAIET</variation>
    <location>
        <begin position="1"/>
        <end position="43"/>
    </location>
</feature>
<reference key="1">
    <citation type="journal article" date="2004" name="Nat. Genet.">
        <title>Complete sequencing and characterization of 21,243 full-length human cDNAs.</title>
        <authorList>
            <person name="Ota T."/>
            <person name="Suzuki Y."/>
            <person name="Nishikawa T."/>
            <person name="Otsuki T."/>
            <person name="Sugiyama T."/>
            <person name="Irie R."/>
            <person name="Wakamatsu A."/>
            <person name="Hayashi K."/>
            <person name="Sato H."/>
            <person name="Nagai K."/>
            <person name="Kimura K."/>
            <person name="Makita H."/>
            <person name="Sekine M."/>
            <person name="Obayashi M."/>
            <person name="Nishi T."/>
            <person name="Shibahara T."/>
            <person name="Tanaka T."/>
            <person name="Ishii S."/>
            <person name="Yamamoto J."/>
            <person name="Saito K."/>
            <person name="Kawai Y."/>
            <person name="Isono Y."/>
            <person name="Nakamura Y."/>
            <person name="Nagahari K."/>
            <person name="Murakami K."/>
            <person name="Yasuda T."/>
            <person name="Iwayanagi T."/>
            <person name="Wagatsuma M."/>
            <person name="Shiratori A."/>
            <person name="Sudo H."/>
            <person name="Hosoiri T."/>
            <person name="Kaku Y."/>
            <person name="Kodaira H."/>
            <person name="Kondo H."/>
            <person name="Sugawara M."/>
            <person name="Takahashi M."/>
            <person name="Kanda K."/>
            <person name="Yokoi T."/>
            <person name="Furuya T."/>
            <person name="Kikkawa E."/>
            <person name="Omura Y."/>
            <person name="Abe K."/>
            <person name="Kamihara K."/>
            <person name="Katsuta N."/>
            <person name="Sato K."/>
            <person name="Tanikawa M."/>
            <person name="Yamazaki M."/>
            <person name="Ninomiya K."/>
            <person name="Ishibashi T."/>
            <person name="Yamashita H."/>
            <person name="Murakawa K."/>
            <person name="Fujimori K."/>
            <person name="Tanai H."/>
            <person name="Kimata M."/>
            <person name="Watanabe M."/>
            <person name="Hiraoka S."/>
            <person name="Chiba Y."/>
            <person name="Ishida S."/>
            <person name="Ono Y."/>
            <person name="Takiguchi S."/>
            <person name="Watanabe S."/>
            <person name="Yosida M."/>
            <person name="Hotuta T."/>
            <person name="Kusano J."/>
            <person name="Kanehori K."/>
            <person name="Takahashi-Fujii A."/>
            <person name="Hara H."/>
            <person name="Tanase T.-O."/>
            <person name="Nomura Y."/>
            <person name="Togiya S."/>
            <person name="Komai F."/>
            <person name="Hara R."/>
            <person name="Takeuchi K."/>
            <person name="Arita M."/>
            <person name="Imose N."/>
            <person name="Musashino K."/>
            <person name="Yuuki H."/>
            <person name="Oshima A."/>
            <person name="Sasaki N."/>
            <person name="Aotsuka S."/>
            <person name="Yoshikawa Y."/>
            <person name="Matsunawa H."/>
            <person name="Ichihara T."/>
            <person name="Shiohata N."/>
            <person name="Sano S."/>
            <person name="Moriya S."/>
            <person name="Momiyama H."/>
            <person name="Satoh N."/>
            <person name="Takami S."/>
            <person name="Terashima Y."/>
            <person name="Suzuki O."/>
            <person name="Nakagawa S."/>
            <person name="Senoh A."/>
            <person name="Mizoguchi H."/>
            <person name="Goto Y."/>
            <person name="Shimizu F."/>
            <person name="Wakebe H."/>
            <person name="Hishigaki H."/>
            <person name="Watanabe T."/>
            <person name="Sugiyama A."/>
            <person name="Takemoto M."/>
            <person name="Kawakami B."/>
            <person name="Yamazaki M."/>
            <person name="Watanabe K."/>
            <person name="Kumagai A."/>
            <person name="Itakura S."/>
            <person name="Fukuzumi Y."/>
            <person name="Fujimori Y."/>
            <person name="Komiyama M."/>
            <person name="Tashiro H."/>
            <person name="Tanigami A."/>
            <person name="Fujiwara T."/>
            <person name="Ono T."/>
            <person name="Yamada K."/>
            <person name="Fujii Y."/>
            <person name="Ozaki K."/>
            <person name="Hirao M."/>
            <person name="Ohmori Y."/>
            <person name="Kawabata A."/>
            <person name="Hikiji T."/>
            <person name="Kobatake N."/>
            <person name="Inagaki H."/>
            <person name="Ikema Y."/>
            <person name="Okamoto S."/>
            <person name="Okitani R."/>
            <person name="Kawakami T."/>
            <person name="Noguchi S."/>
            <person name="Itoh T."/>
            <person name="Shigeta K."/>
            <person name="Senba T."/>
            <person name="Matsumura K."/>
            <person name="Nakajima Y."/>
            <person name="Mizuno T."/>
            <person name="Morinaga M."/>
            <person name="Sasaki M."/>
            <person name="Togashi T."/>
            <person name="Oyama M."/>
            <person name="Hata H."/>
            <person name="Watanabe M."/>
            <person name="Komatsu T."/>
            <person name="Mizushima-Sugano J."/>
            <person name="Satoh T."/>
            <person name="Shirai Y."/>
            <person name="Takahashi Y."/>
            <person name="Nakagawa K."/>
            <person name="Okumura K."/>
            <person name="Nagase T."/>
            <person name="Nomura N."/>
            <person name="Kikuchi H."/>
            <person name="Masuho Y."/>
            <person name="Yamashita R."/>
            <person name="Nakai K."/>
            <person name="Yada T."/>
            <person name="Nakamura Y."/>
            <person name="Ohara O."/>
            <person name="Isogai T."/>
            <person name="Sugano S."/>
        </authorList>
    </citation>
    <scope>NUCLEOTIDE SEQUENCE [LARGE SCALE MRNA] (ISOFORM 1)</scope>
    <source>
        <tissue>Testis</tissue>
    </source>
</reference>
<reference key="2">
    <citation type="submission" date="2005-07" db="EMBL/GenBank/DDBJ databases">
        <authorList>
            <person name="Mural R.J."/>
            <person name="Istrail S."/>
            <person name="Sutton G.G."/>
            <person name="Florea L."/>
            <person name="Halpern A.L."/>
            <person name="Mobarry C.M."/>
            <person name="Lippert R."/>
            <person name="Walenz B."/>
            <person name="Shatkay H."/>
            <person name="Dew I."/>
            <person name="Miller J.R."/>
            <person name="Flanigan M.J."/>
            <person name="Edwards N.J."/>
            <person name="Bolanos R."/>
            <person name="Fasulo D."/>
            <person name="Halldorsson B.V."/>
            <person name="Hannenhalli S."/>
            <person name="Turner R."/>
            <person name="Yooseph S."/>
            <person name="Lu F."/>
            <person name="Nusskern D.R."/>
            <person name="Shue B.C."/>
            <person name="Zheng X.H."/>
            <person name="Zhong F."/>
            <person name="Delcher A.L."/>
            <person name="Huson D.H."/>
            <person name="Kravitz S.A."/>
            <person name="Mouchard L."/>
            <person name="Reinert K."/>
            <person name="Remington K.A."/>
            <person name="Clark A.G."/>
            <person name="Waterman M.S."/>
            <person name="Eichler E.E."/>
            <person name="Adams M.D."/>
            <person name="Hunkapiller M.W."/>
            <person name="Myers E.W."/>
            <person name="Venter J.C."/>
        </authorList>
    </citation>
    <scope>NUCLEOTIDE SEQUENCE [LARGE SCALE GENOMIC DNA]</scope>
</reference>
<reference key="3">
    <citation type="journal article" date="2004" name="Genome Res.">
        <title>The status, quality, and expansion of the NIH full-length cDNA project: the Mammalian Gene Collection (MGC).</title>
        <authorList>
            <consortium name="The MGC Project Team"/>
        </authorList>
    </citation>
    <scope>NUCLEOTIDE SEQUENCE [LARGE SCALE MRNA] (ISOFORMS 1 AND 2)</scope>
</reference>
<reference key="4">
    <citation type="journal article" date="2020" name="Proc. Natl. Acad. Sci. U.S.A.">
        <title>Spermatozoa lacking Fertilization Influencing Membrane Protein (FIMP) fail to fuse with oocytes in mice.</title>
        <authorList>
            <person name="Fujihara Y."/>
            <person name="Lu Y."/>
            <person name="Noda T."/>
            <person name="Oji A."/>
            <person name="Larasati T."/>
            <person name="Kojima-Kita K."/>
            <person name="Yu Z."/>
            <person name="Matzuk R.M."/>
            <person name="Matzuk M.M."/>
            <person name="Ikawa M."/>
        </authorList>
    </citation>
    <scope>TISSUE SPECIFICITY</scope>
</reference>
<proteinExistence type="evidence at protein level"/>
<gene>
    <name evidence="5" type="primary">FIMP</name>
    <name evidence="7" type="synonym">C16orf92</name>
</gene>
<dbReference type="EMBL" id="AK058133">
    <property type="protein sequence ID" value="BAB71678.1"/>
    <property type="molecule type" value="mRNA"/>
</dbReference>
<dbReference type="EMBL" id="CH471238">
    <property type="protein sequence ID" value="EAW79941.1"/>
    <property type="molecule type" value="Genomic_DNA"/>
</dbReference>
<dbReference type="EMBL" id="BC101433">
    <property type="protein sequence ID" value="AAI01434.1"/>
    <property type="molecule type" value="mRNA"/>
</dbReference>
<dbReference type="EMBL" id="BC101434">
    <property type="protein sequence ID" value="AAI01435.1"/>
    <property type="molecule type" value="mRNA"/>
</dbReference>
<dbReference type="EMBL" id="BC101435">
    <property type="protein sequence ID" value="AAI01436.1"/>
    <property type="molecule type" value="mRNA"/>
</dbReference>
<dbReference type="EMBL" id="BC101436">
    <property type="protein sequence ID" value="AAI01437.1"/>
    <property type="molecule type" value="mRNA"/>
</dbReference>
<dbReference type="EMBL" id="BC127955">
    <property type="protein sequence ID" value="AAI27956.1"/>
    <property type="molecule type" value="mRNA"/>
</dbReference>
<dbReference type="CCDS" id="CCDS42146.1">
    <molecule id="Q96LL3-1"/>
</dbReference>
<dbReference type="CCDS" id="CCDS92135.1">
    <molecule id="Q96LL3-2"/>
</dbReference>
<dbReference type="RefSeq" id="NP_001103129.1">
    <molecule id="Q96LL3-2"/>
    <property type="nucleotide sequence ID" value="NM_001109659.1"/>
</dbReference>
<dbReference type="RefSeq" id="NP_001103130.1">
    <molecule id="Q96LL3-1"/>
    <property type="nucleotide sequence ID" value="NM_001109660.1"/>
</dbReference>
<dbReference type="BioGRID" id="126982">
    <property type="interactions" value="17"/>
</dbReference>
<dbReference type="FunCoup" id="Q96LL3">
    <property type="interactions" value="2"/>
</dbReference>
<dbReference type="IntAct" id="Q96LL3">
    <property type="interactions" value="17"/>
</dbReference>
<dbReference type="STRING" id="9606.ENSP00000300575"/>
<dbReference type="iPTMnet" id="Q96LL3"/>
<dbReference type="PhosphoSitePlus" id="Q96LL3"/>
<dbReference type="BioMuta" id="C16orf92"/>
<dbReference type="PaxDb" id="9606-ENSP00000300575"/>
<dbReference type="DNASU" id="146378"/>
<dbReference type="Ensembl" id="ENST00000300575.6">
    <molecule id="Q96LL3-1"/>
    <property type="protein sequence ID" value="ENSP00000300575.2"/>
    <property type="gene ID" value="ENSG00000167194.8"/>
</dbReference>
<dbReference type="Ensembl" id="ENST00000681219.1">
    <molecule id="Q96LL3-2"/>
    <property type="protein sequence ID" value="ENSP00000506393.1"/>
    <property type="gene ID" value="ENSG00000167194.8"/>
</dbReference>
<dbReference type="GeneID" id="146378"/>
<dbReference type="KEGG" id="hsa:146378"/>
<dbReference type="MANE-Select" id="ENST00000681219.1">
    <molecule id="Q96LL3-2"/>
    <property type="protein sequence ID" value="ENSP00000506393.1"/>
    <property type="RefSeq nucleotide sequence ID" value="NM_001109659.2"/>
    <property type="RefSeq protein sequence ID" value="NP_001103129.1"/>
</dbReference>
<dbReference type="UCSC" id="uc002dvs.2">
    <molecule id="Q96LL3-1"/>
    <property type="organism name" value="human"/>
</dbReference>
<dbReference type="AGR" id="HGNC:26346"/>
<dbReference type="CTD" id="146378"/>
<dbReference type="GeneCards" id="C16orf92"/>
<dbReference type="HGNC" id="HGNC:26346">
    <property type="gene designation" value="C16orf92"/>
</dbReference>
<dbReference type="HPA" id="ENSG00000167194">
    <property type="expression patterns" value="Group enriched (retina, testis)"/>
</dbReference>
<dbReference type="MalaCards" id="C16orf92"/>
<dbReference type="MIM" id="618911">
    <property type="type" value="gene"/>
</dbReference>
<dbReference type="neXtProt" id="NX_Q96LL3"/>
<dbReference type="PharmGKB" id="PA164716866"/>
<dbReference type="VEuPathDB" id="HostDB:ENSG00000167194"/>
<dbReference type="eggNOG" id="ENOG502RVJG">
    <property type="taxonomic scope" value="Eukaryota"/>
</dbReference>
<dbReference type="GeneTree" id="ENSGT00390000002780"/>
<dbReference type="HOGENOM" id="CLU_163070_0_0_1"/>
<dbReference type="InParanoid" id="Q96LL3"/>
<dbReference type="OMA" id="IERPDFF"/>
<dbReference type="OrthoDB" id="9606174at2759"/>
<dbReference type="PAN-GO" id="Q96LL3">
    <property type="GO annotations" value="1 GO annotation based on evolutionary models"/>
</dbReference>
<dbReference type="PhylomeDB" id="Q96LL3"/>
<dbReference type="TreeFam" id="TF338342"/>
<dbReference type="PathwayCommons" id="Q96LL3"/>
<dbReference type="SignaLink" id="Q96LL3"/>
<dbReference type="BioGRID-ORCS" id="146378">
    <property type="hits" value="21 hits in 1130 CRISPR screens"/>
</dbReference>
<dbReference type="GenomeRNAi" id="146378"/>
<dbReference type="Pharos" id="Q96LL3">
    <property type="development level" value="Tdark"/>
</dbReference>
<dbReference type="PRO" id="PR:Q96LL3"/>
<dbReference type="Proteomes" id="UP000005640">
    <property type="component" value="Chromosome 16"/>
</dbReference>
<dbReference type="RNAct" id="Q96LL3">
    <property type="molecule type" value="protein"/>
</dbReference>
<dbReference type="Bgee" id="ENSG00000167194">
    <property type="expression patterns" value="Expressed in right testis and 108 other cell types or tissues"/>
</dbReference>
<dbReference type="ExpressionAtlas" id="Q96LL3">
    <property type="expression patterns" value="baseline and differential"/>
</dbReference>
<dbReference type="GO" id="GO:0005886">
    <property type="term" value="C:plasma membrane"/>
    <property type="evidence" value="ECO:0007669"/>
    <property type="project" value="UniProtKB-SubCell"/>
</dbReference>
<dbReference type="GO" id="GO:0009566">
    <property type="term" value="P:fertilization"/>
    <property type="evidence" value="ECO:0000250"/>
    <property type="project" value="UniProtKB"/>
</dbReference>
<dbReference type="GO" id="GO:0007342">
    <property type="term" value="P:fusion of sperm to egg plasma membrane involved in single fertilization"/>
    <property type="evidence" value="ECO:0000250"/>
    <property type="project" value="UniProtKB"/>
</dbReference>
<dbReference type="InterPro" id="IPR038813">
    <property type="entry name" value="FIMP"/>
</dbReference>
<dbReference type="PANTHER" id="PTHR38648:SF1">
    <property type="entry name" value="FERTILIZATION-INFLUENCING MEMBRANE PROTEIN"/>
    <property type="match status" value="1"/>
</dbReference>
<dbReference type="PANTHER" id="PTHR38648">
    <property type="entry name" value="RIKEN CDNA 4930451I11 GENE"/>
    <property type="match status" value="1"/>
</dbReference>
<dbReference type="Pfam" id="PF17672">
    <property type="entry name" value="FIMP"/>
    <property type="match status" value="1"/>
</dbReference>
<protein>
    <recommendedName>
        <fullName evidence="5">Fertilization-influencing membrane protein</fullName>
    </recommendedName>
</protein>
<evidence type="ECO:0000250" key="1">
    <source>
        <dbReference type="UniProtKB" id="E9Q9R3"/>
    </source>
</evidence>
<evidence type="ECO:0000255" key="2"/>
<evidence type="ECO:0000269" key="3">
    <source>
    </source>
</evidence>
<evidence type="ECO:0000303" key="4">
    <source>
    </source>
</evidence>
<evidence type="ECO:0000303" key="5">
    <source>
    </source>
</evidence>
<evidence type="ECO:0000305" key="6"/>
<evidence type="ECO:0000312" key="7">
    <source>
        <dbReference type="HGNC" id="HGNC:26346"/>
    </source>
</evidence>
<accession>Q96LL3</accession>
<accession>Q494R8</accession>